<evidence type="ECO:0000250" key="1">
    <source>
        <dbReference type="UniProtKB" id="P0DTC9"/>
    </source>
</evidence>
<evidence type="ECO:0000255" key="2">
    <source>
        <dbReference type="HAMAP-Rule" id="MF_04096"/>
    </source>
</evidence>
<evidence type="ECO:0000255" key="3">
    <source>
        <dbReference type="PROSITE-ProRule" id="PRU01276"/>
    </source>
</evidence>
<evidence type="ECO:0000255" key="4">
    <source>
        <dbReference type="PROSITE-ProRule" id="PRU01277"/>
    </source>
</evidence>
<evidence type="ECO:0000256" key="5">
    <source>
        <dbReference type="SAM" id="MobiDB-lite"/>
    </source>
</evidence>
<proteinExistence type="inferred from homology"/>
<comment type="function">
    <text evidence="2">Packages the positive strand viral genome RNA into a helical ribonucleocapsid (RNP) and plays a fundamental role during virion assembly through its interactions with the viral genome and membrane protein M. Plays an important role in enhancing the efficiency of subgenomic viral RNA transcription as well as viral replication.</text>
</comment>
<comment type="subunit">
    <text evidence="2">Homooligomer. Both monomeric and oligomeric forms interact with RNA. Interacts with protein M. Interacts with NSP3; this interaction serves to tether the genome to the newly translated replicase-transcriptase complex at a very early stage of infection.</text>
</comment>
<comment type="subcellular location">
    <subcellularLocation>
        <location evidence="2">Virion</location>
    </subcellularLocation>
    <subcellularLocation>
        <location evidence="2">Host endoplasmic reticulum-Golgi intermediate compartment</location>
    </subcellularLocation>
    <subcellularLocation>
        <location evidence="2">Host Golgi apparatus</location>
    </subcellularLocation>
    <text evidence="2">Located inside the virion, complexed with the viral RNA. Probably associates with ER-derived membranes where it participates in viral RNA synthesis and virus budding.</text>
</comment>
<comment type="PTM">
    <text evidence="2">ADP-ribosylated. The ADP-ribosylation is retained in the virion during infection.</text>
</comment>
<comment type="PTM">
    <text evidence="2">Phosphorylated on serine and threonine residues.</text>
</comment>
<comment type="similarity">
    <text evidence="2">Belongs to the betacoronavirus nucleocapsid protein family.</text>
</comment>
<dbReference type="EMBL" id="EF065513">
    <property type="protein sequence ID" value="ABN10915.1"/>
    <property type="molecule type" value="Genomic_RNA"/>
</dbReference>
<dbReference type="RefSeq" id="YP_001039975.1">
    <property type="nucleotide sequence ID" value="NC_009021.1"/>
</dbReference>
<dbReference type="SMR" id="A3EXH0"/>
<dbReference type="IntAct" id="A3EXH0">
    <property type="interactions" value="1"/>
</dbReference>
<dbReference type="GeneID" id="4836017"/>
<dbReference type="KEGG" id="vg:4836017"/>
<dbReference type="OrthoDB" id="3036at10239"/>
<dbReference type="Proteomes" id="UP000006576">
    <property type="component" value="Genome"/>
</dbReference>
<dbReference type="GO" id="GO:0044172">
    <property type="term" value="C:host cell endoplasmic reticulum-Golgi intermediate compartment"/>
    <property type="evidence" value="ECO:0007669"/>
    <property type="project" value="UniProtKB-SubCell"/>
</dbReference>
<dbReference type="GO" id="GO:0044177">
    <property type="term" value="C:host cell Golgi apparatus"/>
    <property type="evidence" value="ECO:0007669"/>
    <property type="project" value="UniProtKB-SubCell"/>
</dbReference>
<dbReference type="GO" id="GO:1990904">
    <property type="term" value="C:ribonucleoprotein complex"/>
    <property type="evidence" value="ECO:0007669"/>
    <property type="project" value="UniProtKB-KW"/>
</dbReference>
<dbReference type="GO" id="GO:0019013">
    <property type="term" value="C:viral nucleocapsid"/>
    <property type="evidence" value="ECO:0007669"/>
    <property type="project" value="UniProtKB-UniRule"/>
</dbReference>
<dbReference type="GO" id="GO:0003723">
    <property type="term" value="F:RNA binding"/>
    <property type="evidence" value="ECO:0007669"/>
    <property type="project" value="UniProtKB-UniRule"/>
</dbReference>
<dbReference type="CDD" id="cd21595">
    <property type="entry name" value="CoV_N-CTD"/>
    <property type="match status" value="1"/>
</dbReference>
<dbReference type="CDD" id="cd21554">
    <property type="entry name" value="CoV_N-NTD"/>
    <property type="match status" value="1"/>
</dbReference>
<dbReference type="HAMAP" id="MF_04096">
    <property type="entry name" value="BETA_CORONA_NCAP"/>
    <property type="match status" value="1"/>
</dbReference>
<dbReference type="InterPro" id="IPR044344">
    <property type="entry name" value="N_prot_C_CoV"/>
</dbReference>
<dbReference type="InterPro" id="IPR044345">
    <property type="entry name" value="N_prot_N_CoV"/>
</dbReference>
<dbReference type="InterPro" id="IPR043505">
    <property type="entry name" value="NCAP_bCoV"/>
</dbReference>
<dbReference type="InterPro" id="IPR001218">
    <property type="entry name" value="Nucleocap_CoV"/>
</dbReference>
<dbReference type="InterPro" id="IPR037179">
    <property type="entry name" value="Nucleocapsid_C"/>
</dbReference>
<dbReference type="InterPro" id="IPR037195">
    <property type="entry name" value="Nucleocapsid_N"/>
</dbReference>
<dbReference type="Pfam" id="PF00937">
    <property type="entry name" value="CoV_nucleocap"/>
    <property type="match status" value="1"/>
</dbReference>
<dbReference type="PIRSF" id="PIRSF003888">
    <property type="entry name" value="Corona_nucleocap"/>
    <property type="match status" value="1"/>
</dbReference>
<dbReference type="SUPFAM" id="SSF110304">
    <property type="entry name" value="Coronavirus RNA-binding domain"/>
    <property type="match status" value="1"/>
</dbReference>
<dbReference type="SUPFAM" id="SSF103068">
    <property type="entry name" value="Nucleocapsid protein dimerization domain"/>
    <property type="match status" value="1"/>
</dbReference>
<dbReference type="PROSITE" id="PS51929">
    <property type="entry name" value="COV_N_CTD"/>
    <property type="match status" value="1"/>
</dbReference>
<dbReference type="PROSITE" id="PS51928">
    <property type="entry name" value="COV_N_NTD"/>
    <property type="match status" value="1"/>
</dbReference>
<protein>
    <recommendedName>
        <fullName evidence="2">Nucleoprotein</fullName>
    </recommendedName>
    <alternativeName>
        <fullName evidence="2">Nucleocapsid protein</fullName>
        <shortName evidence="2">NC</shortName>
        <shortName evidence="2">Protein N</shortName>
    </alternativeName>
</protein>
<name>NCAP_BCHK9</name>
<keyword id="KW-0013">ADP-ribosylation</keyword>
<keyword id="KW-1040">Host Golgi apparatus</keyword>
<keyword id="KW-0597">Phosphoprotein</keyword>
<keyword id="KW-1185">Reference proteome</keyword>
<keyword id="KW-0687">Ribonucleoprotein</keyword>
<keyword id="KW-0694">RNA-binding</keyword>
<keyword id="KW-0804">Transcription</keyword>
<keyword id="KW-0805">Transcription regulation</keyword>
<keyword id="KW-0543">Viral nucleoprotein</keyword>
<keyword id="KW-0946">Virion</keyword>
<reference key="1">
    <citation type="journal article" date="2007" name="J. Virol.">
        <title>Comparative analysis of twelve genomes of three novel group 2c and group 2d coronaviruses reveals unique group and subgroup features.</title>
        <authorList>
            <person name="Woo P.C.Y."/>
            <person name="Wang M."/>
            <person name="Lau S.K.P."/>
            <person name="Xu H.F."/>
            <person name="Poon R.W.S."/>
            <person name="Guo R."/>
            <person name="Wong B.H.L."/>
            <person name="Gao K."/>
            <person name="Tsoi H.-W."/>
            <person name="Huang Y."/>
            <person name="Li K.S.M."/>
            <person name="Lam C.S.F."/>
            <person name="Chan K.-H."/>
            <person name="Zheng B.-J."/>
            <person name="Yuen K.-Y."/>
        </authorList>
    </citation>
    <scope>NUCLEOTIDE SEQUENCE [GENOMIC RNA]</scope>
    <source>
        <strain>Isolate HKU9-1</strain>
    </source>
</reference>
<gene>
    <name evidence="2" type="primary">N</name>
    <name type="ORF">6</name>
</gene>
<feature type="chain" id="PRO_0000291327" description="Nucleoprotein">
    <location>
        <begin position="1"/>
        <end position="468"/>
    </location>
</feature>
<feature type="domain" description="CoV N NTD" evidence="3">
    <location>
        <begin position="62"/>
        <end position="186"/>
    </location>
</feature>
<feature type="domain" description="CoV N CTD" evidence="4">
    <location>
        <begin position="259"/>
        <end position="376"/>
    </location>
</feature>
<feature type="region of interest" description="Disordered" evidence="5">
    <location>
        <begin position="1"/>
        <end position="64"/>
    </location>
</feature>
<feature type="region of interest" description="RNA-binding" evidence="2">
    <location>
        <begin position="48"/>
        <end position="193"/>
    </location>
</feature>
<feature type="region of interest" description="Disordered" evidence="5">
    <location>
        <begin position="181"/>
        <end position="228"/>
    </location>
</feature>
<feature type="region of interest" description="Dimerization" evidence="2">
    <location>
        <begin position="270"/>
        <end position="373"/>
    </location>
</feature>
<feature type="region of interest" description="Disordered" evidence="5">
    <location>
        <begin position="373"/>
        <end position="399"/>
    </location>
</feature>
<feature type="region of interest" description="Disordered" evidence="5">
    <location>
        <begin position="419"/>
        <end position="468"/>
    </location>
</feature>
<feature type="compositionally biased region" description="Basic and acidic residues" evidence="5">
    <location>
        <begin position="18"/>
        <end position="33"/>
    </location>
</feature>
<feature type="compositionally biased region" description="Low complexity" evidence="5">
    <location>
        <begin position="190"/>
        <end position="223"/>
    </location>
</feature>
<feature type="compositionally biased region" description="Basic and acidic residues" evidence="5">
    <location>
        <begin position="379"/>
        <end position="390"/>
    </location>
</feature>
<feature type="compositionally biased region" description="Acidic residues" evidence="5">
    <location>
        <begin position="419"/>
        <end position="436"/>
    </location>
</feature>
<feature type="binding site" evidence="1">
    <location>
        <position position="106"/>
    </location>
    <ligand>
        <name>RNA</name>
        <dbReference type="ChEBI" id="CHEBI:33697"/>
    </ligand>
</feature>
<feature type="binding site" evidence="1">
    <location>
        <position position="120"/>
    </location>
    <ligand>
        <name>RNA</name>
        <dbReference type="ChEBI" id="CHEBI:33697"/>
    </ligand>
</feature>
<feature type="binding site" evidence="1">
    <location>
        <position position="162"/>
    </location>
    <ligand>
        <name>RNA</name>
        <dbReference type="ChEBI" id="CHEBI:33697"/>
    </ligand>
</feature>
<feature type="modified residue" description="Phosphoserine; by host" evidence="2">
    <location>
        <position position="165"/>
    </location>
</feature>
<feature type="modified residue" description="Phosphothreonine; by host" evidence="2">
    <location>
        <position position="451"/>
    </location>
</feature>
<accession>A3EXH0</accession>
<organismHost>
    <name type="scientific">Rousettus leschenaultii</name>
    <name type="common">Leschenault's rousette</name>
    <name type="synonym">Pteropus leschenaultii</name>
    <dbReference type="NCBI Taxonomy" id="9408"/>
</organismHost>
<organism>
    <name type="scientific">Bat coronavirus HKU9</name>
    <name type="common">BtCoV</name>
    <name type="synonym">BtCoV/HKU9</name>
    <dbReference type="NCBI Taxonomy" id="694006"/>
    <lineage>
        <taxon>Viruses</taxon>
        <taxon>Riboviria</taxon>
        <taxon>Orthornavirae</taxon>
        <taxon>Pisuviricota</taxon>
        <taxon>Pisoniviricetes</taxon>
        <taxon>Nidovirales</taxon>
        <taxon>Cornidovirineae</taxon>
        <taxon>Coronaviridae</taxon>
        <taxon>Orthocoronavirinae</taxon>
        <taxon>Betacoronavirus</taxon>
        <taxon>Nobecovirus</taxon>
    </lineage>
</organism>
<sequence>MSGRNRSRSGTPSPKVTFKQESDGSDSESERRNGNRNGARPKNNNSRGSAPKPEKPKAAPPQNVSWFAPLVQTGKAELRFPRGEGVPVSQGVDSTYEHGYWLRTQRSFQKGGKQVLANPRWYFYYTGTGRFGDLRFGTKNPDIVWVGQEGANINRLGDMGTRNPSNDGAIPVQLAGGIPKGFYAEGRGSRGNSRSSSRNSSRASSRGNSRASSRGASPGRPAANPSTEPWMAYLVQKLERLESQVSGTKPATKNPVQVTKNEAAANAKKLRHKRTAHKGSGVTVNYGRRGPGDLEGNFGDREMIKLGTDDPRFAAAAQMAPNVSSFLFMSHLSTRDEDDALWLHYKGAIKLPKDDPNYEQWTKILAENLNAYKDFPPTEPKKDKKKKEETAQDTVIFEDASTGTDQTVVKVWVKDQDAQTDDEWLGGDETVYEDEDDRPKTQRRHKKRGSTASRVTIADPTNAGAERS</sequence>